<protein>
    <recommendedName>
        <fullName evidence="1">Uracil phosphoribosyltransferase</fullName>
        <ecNumber evidence="1">2.4.2.9</ecNumber>
    </recommendedName>
    <alternativeName>
        <fullName evidence="1">UMP pyrophosphorylase</fullName>
    </alternativeName>
    <alternativeName>
        <fullName evidence="1">UPRTase</fullName>
    </alternativeName>
</protein>
<name>UPP_DEIRA</name>
<keyword id="KW-0021">Allosteric enzyme</keyword>
<keyword id="KW-0328">Glycosyltransferase</keyword>
<keyword id="KW-0342">GTP-binding</keyword>
<keyword id="KW-0460">Magnesium</keyword>
<keyword id="KW-0547">Nucleotide-binding</keyword>
<keyword id="KW-1185">Reference proteome</keyword>
<keyword id="KW-0808">Transferase</keyword>
<sequence>MCLMVTLVEHPLVQHKLSLMRDERTGVKEFRELAGELSLLLAYEAMRDLEVEPVRFATPIEEGDFPMLSGKKLALVAILRAGLVMTDAIVTLVPAAKVGHIGMYRDPQSLAPVAYYSKLPADIAERRVFLTDPMLATGGSANAAIQNLKDAGAQSIKLMTILAAPEGIHAVQQAHPDVDIVTASVDSRLNDHGYIVPGLGDAGDRIYGTK</sequence>
<dbReference type="EC" id="2.4.2.9" evidence="1"/>
<dbReference type="EMBL" id="AE000513">
    <property type="protein sequence ID" value="AAF11127.1"/>
    <property type="molecule type" value="Genomic_DNA"/>
</dbReference>
<dbReference type="PIR" id="C75380">
    <property type="entry name" value="C75380"/>
</dbReference>
<dbReference type="RefSeq" id="NP_295286.1">
    <property type="nucleotide sequence ID" value="NC_001263.1"/>
</dbReference>
<dbReference type="SMR" id="Q9RU32"/>
<dbReference type="FunCoup" id="Q9RU32">
    <property type="interactions" value="413"/>
</dbReference>
<dbReference type="STRING" id="243230.DR_1563"/>
<dbReference type="PaxDb" id="243230-DR_1563"/>
<dbReference type="EnsemblBacteria" id="AAF11127">
    <property type="protein sequence ID" value="AAF11127"/>
    <property type="gene ID" value="DR_1563"/>
</dbReference>
<dbReference type="KEGG" id="dra:DR_1563"/>
<dbReference type="PATRIC" id="fig|243230.17.peg.1764"/>
<dbReference type="eggNOG" id="COG0035">
    <property type="taxonomic scope" value="Bacteria"/>
</dbReference>
<dbReference type="HOGENOM" id="CLU_067096_2_2_0"/>
<dbReference type="InParanoid" id="Q9RU32"/>
<dbReference type="OrthoDB" id="9781675at2"/>
<dbReference type="UniPathway" id="UPA00574">
    <property type="reaction ID" value="UER00636"/>
</dbReference>
<dbReference type="Proteomes" id="UP000002524">
    <property type="component" value="Chromosome 1"/>
</dbReference>
<dbReference type="GO" id="GO:0005737">
    <property type="term" value="C:cytoplasm"/>
    <property type="evidence" value="ECO:0000318"/>
    <property type="project" value="GO_Central"/>
</dbReference>
<dbReference type="GO" id="GO:0005525">
    <property type="term" value="F:GTP binding"/>
    <property type="evidence" value="ECO:0007669"/>
    <property type="project" value="UniProtKB-KW"/>
</dbReference>
<dbReference type="GO" id="GO:0000287">
    <property type="term" value="F:magnesium ion binding"/>
    <property type="evidence" value="ECO:0007669"/>
    <property type="project" value="UniProtKB-UniRule"/>
</dbReference>
<dbReference type="GO" id="GO:0004845">
    <property type="term" value="F:uracil phosphoribosyltransferase activity"/>
    <property type="evidence" value="ECO:0000318"/>
    <property type="project" value="GO_Central"/>
</dbReference>
<dbReference type="GO" id="GO:0044206">
    <property type="term" value="P:UMP salvage"/>
    <property type="evidence" value="ECO:0007669"/>
    <property type="project" value="UniProtKB-UniRule"/>
</dbReference>
<dbReference type="GO" id="GO:0006223">
    <property type="term" value="P:uracil salvage"/>
    <property type="evidence" value="ECO:0007669"/>
    <property type="project" value="InterPro"/>
</dbReference>
<dbReference type="CDD" id="cd06223">
    <property type="entry name" value="PRTases_typeI"/>
    <property type="match status" value="1"/>
</dbReference>
<dbReference type="FunFam" id="3.40.50.2020:FF:000003">
    <property type="entry name" value="Uracil phosphoribosyltransferase"/>
    <property type="match status" value="1"/>
</dbReference>
<dbReference type="Gene3D" id="3.40.50.2020">
    <property type="match status" value="1"/>
</dbReference>
<dbReference type="HAMAP" id="MF_01218_B">
    <property type="entry name" value="Upp_B"/>
    <property type="match status" value="1"/>
</dbReference>
<dbReference type="InterPro" id="IPR000836">
    <property type="entry name" value="PRibTrfase_dom"/>
</dbReference>
<dbReference type="InterPro" id="IPR029057">
    <property type="entry name" value="PRTase-like"/>
</dbReference>
<dbReference type="InterPro" id="IPR034332">
    <property type="entry name" value="Upp_B"/>
</dbReference>
<dbReference type="InterPro" id="IPR050054">
    <property type="entry name" value="UPRTase/APRTase"/>
</dbReference>
<dbReference type="InterPro" id="IPR005765">
    <property type="entry name" value="Ura_phspho_trans"/>
</dbReference>
<dbReference type="NCBIfam" id="NF001097">
    <property type="entry name" value="PRK00129.1"/>
    <property type="match status" value="1"/>
</dbReference>
<dbReference type="NCBIfam" id="TIGR01091">
    <property type="entry name" value="upp"/>
    <property type="match status" value="1"/>
</dbReference>
<dbReference type="PANTHER" id="PTHR32315">
    <property type="entry name" value="ADENINE PHOSPHORIBOSYLTRANSFERASE"/>
    <property type="match status" value="1"/>
</dbReference>
<dbReference type="PANTHER" id="PTHR32315:SF4">
    <property type="entry name" value="URACIL PHOSPHORIBOSYLTRANSFERASE, CHLOROPLASTIC"/>
    <property type="match status" value="1"/>
</dbReference>
<dbReference type="Pfam" id="PF14681">
    <property type="entry name" value="UPRTase"/>
    <property type="match status" value="1"/>
</dbReference>
<dbReference type="SUPFAM" id="SSF53271">
    <property type="entry name" value="PRTase-like"/>
    <property type="match status" value="1"/>
</dbReference>
<organism>
    <name type="scientific">Deinococcus radiodurans (strain ATCC 13939 / DSM 20539 / JCM 16871 / CCUG 27074 / LMG 4051 / NBRC 15346 / NCIMB 9279 / VKM B-1422 / R1)</name>
    <dbReference type="NCBI Taxonomy" id="243230"/>
    <lineage>
        <taxon>Bacteria</taxon>
        <taxon>Thermotogati</taxon>
        <taxon>Deinococcota</taxon>
        <taxon>Deinococci</taxon>
        <taxon>Deinococcales</taxon>
        <taxon>Deinococcaceae</taxon>
        <taxon>Deinococcus</taxon>
    </lineage>
</organism>
<reference key="1">
    <citation type="journal article" date="1999" name="Science">
        <title>Genome sequence of the radioresistant bacterium Deinococcus radiodurans R1.</title>
        <authorList>
            <person name="White O."/>
            <person name="Eisen J.A."/>
            <person name="Heidelberg J.F."/>
            <person name="Hickey E.K."/>
            <person name="Peterson J.D."/>
            <person name="Dodson R.J."/>
            <person name="Haft D.H."/>
            <person name="Gwinn M.L."/>
            <person name="Nelson W.C."/>
            <person name="Richardson D.L."/>
            <person name="Moffat K.S."/>
            <person name="Qin H."/>
            <person name="Jiang L."/>
            <person name="Pamphile W."/>
            <person name="Crosby M."/>
            <person name="Shen M."/>
            <person name="Vamathevan J.J."/>
            <person name="Lam P."/>
            <person name="McDonald L.A."/>
            <person name="Utterback T.R."/>
            <person name="Zalewski C."/>
            <person name="Makarova K.S."/>
            <person name="Aravind L."/>
            <person name="Daly M.J."/>
            <person name="Minton K.W."/>
            <person name="Fleischmann R.D."/>
            <person name="Ketchum K.A."/>
            <person name="Nelson K.E."/>
            <person name="Salzberg S.L."/>
            <person name="Smith H.O."/>
            <person name="Venter J.C."/>
            <person name="Fraser C.M."/>
        </authorList>
    </citation>
    <scope>NUCLEOTIDE SEQUENCE [LARGE SCALE GENOMIC DNA]</scope>
    <source>
        <strain>ATCC 13939 / DSM 20539 / JCM 16871 / CCUG 27074 / LMG 4051 / NBRC 15346 / NCIMB 9279 / VKM B-1422 / R1</strain>
    </source>
</reference>
<gene>
    <name evidence="1" type="primary">upp</name>
    <name type="ordered locus">DR_1563</name>
</gene>
<feature type="chain" id="PRO_0000120821" description="Uracil phosphoribosyltransferase">
    <location>
        <begin position="1"/>
        <end position="210"/>
    </location>
</feature>
<feature type="binding site" evidence="1">
    <location>
        <position position="80"/>
    </location>
    <ligand>
        <name>5-phospho-alpha-D-ribose 1-diphosphate</name>
        <dbReference type="ChEBI" id="CHEBI:58017"/>
    </ligand>
</feature>
<feature type="binding site" evidence="1">
    <location>
        <position position="105"/>
    </location>
    <ligand>
        <name>5-phospho-alpha-D-ribose 1-diphosphate</name>
        <dbReference type="ChEBI" id="CHEBI:58017"/>
    </ligand>
</feature>
<feature type="binding site" evidence="1">
    <location>
        <begin position="132"/>
        <end position="140"/>
    </location>
    <ligand>
        <name>5-phospho-alpha-D-ribose 1-diphosphate</name>
        <dbReference type="ChEBI" id="CHEBI:58017"/>
    </ligand>
</feature>
<feature type="binding site" evidence="1">
    <location>
        <position position="195"/>
    </location>
    <ligand>
        <name>uracil</name>
        <dbReference type="ChEBI" id="CHEBI:17568"/>
    </ligand>
</feature>
<feature type="binding site" evidence="1">
    <location>
        <begin position="200"/>
        <end position="202"/>
    </location>
    <ligand>
        <name>uracil</name>
        <dbReference type="ChEBI" id="CHEBI:17568"/>
    </ligand>
</feature>
<feature type="binding site" evidence="1">
    <location>
        <position position="201"/>
    </location>
    <ligand>
        <name>5-phospho-alpha-D-ribose 1-diphosphate</name>
        <dbReference type="ChEBI" id="CHEBI:58017"/>
    </ligand>
</feature>
<accession>Q9RU32</accession>
<comment type="function">
    <text evidence="1">Catalyzes the conversion of uracil and 5-phospho-alpha-D-ribose 1-diphosphate (PRPP) to UMP and diphosphate.</text>
</comment>
<comment type="catalytic activity">
    <reaction evidence="1">
        <text>UMP + diphosphate = 5-phospho-alpha-D-ribose 1-diphosphate + uracil</text>
        <dbReference type="Rhea" id="RHEA:13017"/>
        <dbReference type="ChEBI" id="CHEBI:17568"/>
        <dbReference type="ChEBI" id="CHEBI:33019"/>
        <dbReference type="ChEBI" id="CHEBI:57865"/>
        <dbReference type="ChEBI" id="CHEBI:58017"/>
        <dbReference type="EC" id="2.4.2.9"/>
    </reaction>
</comment>
<comment type="cofactor">
    <cofactor evidence="1">
        <name>Mg(2+)</name>
        <dbReference type="ChEBI" id="CHEBI:18420"/>
    </cofactor>
    <text evidence="1">Binds 1 Mg(2+) ion per subunit. The magnesium is bound as Mg-PRPP.</text>
</comment>
<comment type="activity regulation">
    <text evidence="1">Allosterically activated by GTP.</text>
</comment>
<comment type="pathway">
    <text evidence="1">Pyrimidine metabolism; UMP biosynthesis via salvage pathway; UMP from uracil: step 1/1.</text>
</comment>
<comment type="similarity">
    <text evidence="1">Belongs to the UPRTase family.</text>
</comment>
<evidence type="ECO:0000255" key="1">
    <source>
        <dbReference type="HAMAP-Rule" id="MF_01218"/>
    </source>
</evidence>
<proteinExistence type="inferred from homology"/>